<feature type="chain" id="PRO_0000174620" description="S-adenosylmethionine synthase">
    <location>
        <begin position="1"/>
        <end position="385"/>
    </location>
</feature>
<feature type="region of interest" description="Flexible loop" evidence="1">
    <location>
        <begin position="100"/>
        <end position="110"/>
    </location>
</feature>
<feature type="binding site" description="in other chain" evidence="1">
    <location>
        <position position="16"/>
    </location>
    <ligand>
        <name>ATP</name>
        <dbReference type="ChEBI" id="CHEBI:30616"/>
        <note>ligand shared between two neighboring subunits</note>
    </ligand>
</feature>
<feature type="binding site" evidence="1">
    <location>
        <position position="18"/>
    </location>
    <ligand>
        <name>Mg(2+)</name>
        <dbReference type="ChEBI" id="CHEBI:18420"/>
    </ligand>
</feature>
<feature type="binding site" evidence="1">
    <location>
        <position position="44"/>
    </location>
    <ligand>
        <name>K(+)</name>
        <dbReference type="ChEBI" id="CHEBI:29103"/>
    </ligand>
</feature>
<feature type="binding site" description="in other chain" evidence="1">
    <location>
        <position position="57"/>
    </location>
    <ligand>
        <name>L-methionine</name>
        <dbReference type="ChEBI" id="CHEBI:57844"/>
        <note>ligand shared between two neighboring subunits</note>
    </ligand>
</feature>
<feature type="binding site" description="in other chain" evidence="1">
    <location>
        <position position="100"/>
    </location>
    <ligand>
        <name>L-methionine</name>
        <dbReference type="ChEBI" id="CHEBI:57844"/>
        <note>ligand shared between two neighboring subunits</note>
    </ligand>
</feature>
<feature type="binding site" description="in other chain" evidence="1">
    <location>
        <begin position="165"/>
        <end position="167"/>
    </location>
    <ligand>
        <name>ATP</name>
        <dbReference type="ChEBI" id="CHEBI:30616"/>
        <note>ligand shared between two neighboring subunits</note>
    </ligand>
</feature>
<feature type="binding site" description="in other chain" evidence="1">
    <location>
        <begin position="231"/>
        <end position="232"/>
    </location>
    <ligand>
        <name>ATP</name>
        <dbReference type="ChEBI" id="CHEBI:30616"/>
        <note>ligand shared between two neighboring subunits</note>
    </ligand>
</feature>
<feature type="binding site" evidence="1">
    <location>
        <position position="240"/>
    </location>
    <ligand>
        <name>ATP</name>
        <dbReference type="ChEBI" id="CHEBI:30616"/>
        <note>ligand shared between two neighboring subunits</note>
    </ligand>
</feature>
<feature type="binding site" evidence="1">
    <location>
        <position position="240"/>
    </location>
    <ligand>
        <name>L-methionine</name>
        <dbReference type="ChEBI" id="CHEBI:57844"/>
        <note>ligand shared between two neighboring subunits</note>
    </ligand>
</feature>
<feature type="binding site" description="in other chain" evidence="1">
    <location>
        <begin position="246"/>
        <end position="247"/>
    </location>
    <ligand>
        <name>ATP</name>
        <dbReference type="ChEBI" id="CHEBI:30616"/>
        <note>ligand shared between two neighboring subunits</note>
    </ligand>
</feature>
<feature type="binding site" evidence="1">
    <location>
        <position position="263"/>
    </location>
    <ligand>
        <name>ATP</name>
        <dbReference type="ChEBI" id="CHEBI:30616"/>
        <note>ligand shared between two neighboring subunits</note>
    </ligand>
</feature>
<feature type="binding site" evidence="1">
    <location>
        <position position="267"/>
    </location>
    <ligand>
        <name>ATP</name>
        <dbReference type="ChEBI" id="CHEBI:30616"/>
        <note>ligand shared between two neighboring subunits</note>
    </ligand>
</feature>
<feature type="binding site" description="in other chain" evidence="1">
    <location>
        <position position="271"/>
    </location>
    <ligand>
        <name>L-methionine</name>
        <dbReference type="ChEBI" id="CHEBI:57844"/>
        <note>ligand shared between two neighboring subunits</note>
    </ligand>
</feature>
<reference key="1">
    <citation type="journal article" date="2000" name="Nature">
        <title>DNA sequence of both chromosomes of the cholera pathogen Vibrio cholerae.</title>
        <authorList>
            <person name="Heidelberg J.F."/>
            <person name="Eisen J.A."/>
            <person name="Nelson W.C."/>
            <person name="Clayton R.A."/>
            <person name="Gwinn M.L."/>
            <person name="Dodson R.J."/>
            <person name="Haft D.H."/>
            <person name="Hickey E.K."/>
            <person name="Peterson J.D."/>
            <person name="Umayam L.A."/>
            <person name="Gill S.R."/>
            <person name="Nelson K.E."/>
            <person name="Read T.D."/>
            <person name="Tettelin H."/>
            <person name="Richardson D.L."/>
            <person name="Ermolaeva M.D."/>
            <person name="Vamathevan J.J."/>
            <person name="Bass S."/>
            <person name="Qin H."/>
            <person name="Dragoi I."/>
            <person name="Sellers P."/>
            <person name="McDonald L.A."/>
            <person name="Utterback T.R."/>
            <person name="Fleischmann R.D."/>
            <person name="Nierman W.C."/>
            <person name="White O."/>
            <person name="Salzberg S.L."/>
            <person name="Smith H.O."/>
            <person name="Colwell R.R."/>
            <person name="Mekalanos J.J."/>
            <person name="Venter J.C."/>
            <person name="Fraser C.M."/>
        </authorList>
    </citation>
    <scope>NUCLEOTIDE SEQUENCE [LARGE SCALE GENOMIC DNA]</scope>
    <source>
        <strain>ATCC 39315 / El Tor Inaba N16961</strain>
    </source>
</reference>
<protein>
    <recommendedName>
        <fullName evidence="1">S-adenosylmethionine synthase</fullName>
        <shortName evidence="1">AdoMet synthase</shortName>
        <ecNumber evidence="1">2.5.1.6</ecNumber>
    </recommendedName>
    <alternativeName>
        <fullName evidence="1">MAT</fullName>
    </alternativeName>
    <alternativeName>
        <fullName evidence="1">Methionine adenosyltransferase</fullName>
    </alternativeName>
</protein>
<gene>
    <name evidence="1" type="primary">metK</name>
    <name type="ordered locus">VC_0472</name>
</gene>
<name>METK_VIBCH</name>
<keyword id="KW-0067">ATP-binding</keyword>
<keyword id="KW-0963">Cytoplasm</keyword>
<keyword id="KW-0460">Magnesium</keyword>
<keyword id="KW-0479">Metal-binding</keyword>
<keyword id="KW-0547">Nucleotide-binding</keyword>
<keyword id="KW-0554">One-carbon metabolism</keyword>
<keyword id="KW-0630">Potassium</keyword>
<keyword id="KW-1185">Reference proteome</keyword>
<keyword id="KW-0808">Transferase</keyword>
<comment type="function">
    <text evidence="1">Catalyzes the formation of S-adenosylmethionine (AdoMet) from methionine and ATP. The overall synthetic reaction is composed of two sequential steps, AdoMet formation and the subsequent tripolyphosphate hydrolysis which occurs prior to release of AdoMet from the enzyme.</text>
</comment>
<comment type="catalytic activity">
    <reaction evidence="1">
        <text>L-methionine + ATP + H2O = S-adenosyl-L-methionine + phosphate + diphosphate</text>
        <dbReference type="Rhea" id="RHEA:21080"/>
        <dbReference type="ChEBI" id="CHEBI:15377"/>
        <dbReference type="ChEBI" id="CHEBI:30616"/>
        <dbReference type="ChEBI" id="CHEBI:33019"/>
        <dbReference type="ChEBI" id="CHEBI:43474"/>
        <dbReference type="ChEBI" id="CHEBI:57844"/>
        <dbReference type="ChEBI" id="CHEBI:59789"/>
        <dbReference type="EC" id="2.5.1.6"/>
    </reaction>
</comment>
<comment type="cofactor">
    <cofactor evidence="1">
        <name>Mg(2+)</name>
        <dbReference type="ChEBI" id="CHEBI:18420"/>
    </cofactor>
    <text evidence="1">Binds 2 divalent ions per subunit.</text>
</comment>
<comment type="cofactor">
    <cofactor evidence="1">
        <name>K(+)</name>
        <dbReference type="ChEBI" id="CHEBI:29103"/>
    </cofactor>
    <text evidence="1">Binds 1 potassium ion per subunit.</text>
</comment>
<comment type="pathway">
    <text evidence="1">Amino-acid biosynthesis; S-adenosyl-L-methionine biosynthesis; S-adenosyl-L-methionine from L-methionine: step 1/1.</text>
</comment>
<comment type="subunit">
    <text evidence="1">Homotetramer; dimer of dimers.</text>
</comment>
<comment type="subcellular location">
    <subcellularLocation>
        <location evidence="1">Cytoplasm</location>
    </subcellularLocation>
</comment>
<comment type="similarity">
    <text evidence="1">Belongs to the AdoMet synthase family.</text>
</comment>
<organism>
    <name type="scientific">Vibrio cholerae serotype O1 (strain ATCC 39315 / El Tor Inaba N16961)</name>
    <dbReference type="NCBI Taxonomy" id="243277"/>
    <lineage>
        <taxon>Bacteria</taxon>
        <taxon>Pseudomonadati</taxon>
        <taxon>Pseudomonadota</taxon>
        <taxon>Gammaproteobacteria</taxon>
        <taxon>Vibrionales</taxon>
        <taxon>Vibrionaceae</taxon>
        <taxon>Vibrio</taxon>
    </lineage>
</organism>
<proteinExistence type="inferred from homology"/>
<sequence>MAIKHLFTSESVSEGHPDKIADQISDAVLDAIFEQDPKARVACETYVKTGMVMVGGEITTSAWVDIEEITRQTVREIGYVHSDMGFDANSCAVLNTIGKQSPDINQGVDKADPKEQGAGDQGIMFGYATNETEVLMPAPITYAHRLMQRQAAVRKNGTLPWLRPDAKSQVTFQYDQGKIVGIDAVVLSTQHSDSISTADLREAVMEEIIKPVLPAEWLSKETKYFINPTGRFVIGGPMGDCGLTGRKIIVDTYGGAARHGGGAFSGKDPSKVDRSAAYAARYVAKNIVAAGMADRCEIQLSYAIGVADPTSIMVETFGTEKVSQEIIIEAVRQFFDLRPYGLQEMLNLLQPIYKKTAAYGHFGREEFPWEATDKAALLRDFAGLK</sequence>
<dbReference type="EC" id="2.5.1.6" evidence="1"/>
<dbReference type="EMBL" id="AE003852">
    <property type="protein sequence ID" value="AAF93645.1"/>
    <property type="molecule type" value="Genomic_DNA"/>
</dbReference>
<dbReference type="PIR" id="E82319">
    <property type="entry name" value="E82319"/>
</dbReference>
<dbReference type="RefSeq" id="NP_230126.1">
    <property type="nucleotide sequence ID" value="NC_002505.1"/>
</dbReference>
<dbReference type="RefSeq" id="WP_000985180.1">
    <property type="nucleotide sequence ID" value="NZ_LT906614.1"/>
</dbReference>
<dbReference type="SMR" id="Q9KUP3"/>
<dbReference type="STRING" id="243277.VC_0472"/>
<dbReference type="DNASU" id="2615134"/>
<dbReference type="EnsemblBacteria" id="AAF93645">
    <property type="protein sequence ID" value="AAF93645"/>
    <property type="gene ID" value="VC_0472"/>
</dbReference>
<dbReference type="KEGG" id="vch:VC_0472"/>
<dbReference type="PATRIC" id="fig|243277.26.peg.445"/>
<dbReference type="eggNOG" id="COG0192">
    <property type="taxonomic scope" value="Bacteria"/>
</dbReference>
<dbReference type="HOGENOM" id="CLU_041802_1_1_6"/>
<dbReference type="UniPathway" id="UPA00315">
    <property type="reaction ID" value="UER00080"/>
</dbReference>
<dbReference type="Proteomes" id="UP000000584">
    <property type="component" value="Chromosome 1"/>
</dbReference>
<dbReference type="GO" id="GO:0005829">
    <property type="term" value="C:cytosol"/>
    <property type="evidence" value="ECO:0000318"/>
    <property type="project" value="GO_Central"/>
</dbReference>
<dbReference type="GO" id="GO:0005524">
    <property type="term" value="F:ATP binding"/>
    <property type="evidence" value="ECO:0007669"/>
    <property type="project" value="UniProtKB-UniRule"/>
</dbReference>
<dbReference type="GO" id="GO:0000287">
    <property type="term" value="F:magnesium ion binding"/>
    <property type="evidence" value="ECO:0007669"/>
    <property type="project" value="UniProtKB-UniRule"/>
</dbReference>
<dbReference type="GO" id="GO:0004478">
    <property type="term" value="F:methionine adenosyltransferase activity"/>
    <property type="evidence" value="ECO:0000318"/>
    <property type="project" value="GO_Central"/>
</dbReference>
<dbReference type="GO" id="GO:0006730">
    <property type="term" value="P:one-carbon metabolic process"/>
    <property type="evidence" value="ECO:0007669"/>
    <property type="project" value="UniProtKB-KW"/>
</dbReference>
<dbReference type="GO" id="GO:0006556">
    <property type="term" value="P:S-adenosylmethionine biosynthetic process"/>
    <property type="evidence" value="ECO:0000318"/>
    <property type="project" value="GO_Central"/>
</dbReference>
<dbReference type="CDD" id="cd18079">
    <property type="entry name" value="S-AdoMet_synt"/>
    <property type="match status" value="1"/>
</dbReference>
<dbReference type="FunFam" id="3.30.300.10:FF:000001">
    <property type="entry name" value="S-adenosylmethionine synthase"/>
    <property type="match status" value="1"/>
</dbReference>
<dbReference type="FunFam" id="3.30.300.10:FF:000003">
    <property type="entry name" value="S-adenosylmethionine synthase"/>
    <property type="match status" value="1"/>
</dbReference>
<dbReference type="Gene3D" id="3.30.300.10">
    <property type="match status" value="3"/>
</dbReference>
<dbReference type="HAMAP" id="MF_00086">
    <property type="entry name" value="S_AdoMet_synth1"/>
    <property type="match status" value="1"/>
</dbReference>
<dbReference type="InterPro" id="IPR022631">
    <property type="entry name" value="ADOMET_SYNTHASE_CS"/>
</dbReference>
<dbReference type="InterPro" id="IPR022630">
    <property type="entry name" value="S-AdoMet_synt_C"/>
</dbReference>
<dbReference type="InterPro" id="IPR022629">
    <property type="entry name" value="S-AdoMet_synt_central"/>
</dbReference>
<dbReference type="InterPro" id="IPR022628">
    <property type="entry name" value="S-AdoMet_synt_N"/>
</dbReference>
<dbReference type="InterPro" id="IPR002133">
    <property type="entry name" value="S-AdoMet_synthetase"/>
</dbReference>
<dbReference type="InterPro" id="IPR022636">
    <property type="entry name" value="S-AdoMet_synthetase_sfam"/>
</dbReference>
<dbReference type="NCBIfam" id="TIGR01034">
    <property type="entry name" value="metK"/>
    <property type="match status" value="1"/>
</dbReference>
<dbReference type="PANTHER" id="PTHR11964">
    <property type="entry name" value="S-ADENOSYLMETHIONINE SYNTHETASE"/>
    <property type="match status" value="1"/>
</dbReference>
<dbReference type="Pfam" id="PF02773">
    <property type="entry name" value="S-AdoMet_synt_C"/>
    <property type="match status" value="1"/>
</dbReference>
<dbReference type="Pfam" id="PF02772">
    <property type="entry name" value="S-AdoMet_synt_M"/>
    <property type="match status" value="1"/>
</dbReference>
<dbReference type="Pfam" id="PF00438">
    <property type="entry name" value="S-AdoMet_synt_N"/>
    <property type="match status" value="1"/>
</dbReference>
<dbReference type="PIRSF" id="PIRSF000497">
    <property type="entry name" value="MAT"/>
    <property type="match status" value="1"/>
</dbReference>
<dbReference type="SUPFAM" id="SSF55973">
    <property type="entry name" value="S-adenosylmethionine synthetase"/>
    <property type="match status" value="3"/>
</dbReference>
<dbReference type="PROSITE" id="PS00376">
    <property type="entry name" value="ADOMET_SYNTHASE_1"/>
    <property type="match status" value="1"/>
</dbReference>
<dbReference type="PROSITE" id="PS00377">
    <property type="entry name" value="ADOMET_SYNTHASE_2"/>
    <property type="match status" value="1"/>
</dbReference>
<accession>Q9KUP3</accession>
<evidence type="ECO:0000255" key="1">
    <source>
        <dbReference type="HAMAP-Rule" id="MF_00086"/>
    </source>
</evidence>